<sequence>MNFGLFFLNFQPEGMTSEMVLDNMVDTVALVDKDDYHFKRVLVSEHHFSKNGIIGEPLTAISFLLGLTKRIEIGSLNQVITTHHPVRIGEQTGLLDQMSYGRFVLGLSDCVNDFEMDFFKRKRSSQQQQFEACYEILNEALTTNYCQADDDFFNFPRISVNPHCISEVKQYILASSMGVVEWAARKGLPLTYRWSDSLAEKEKYYQRYLAVAKENNIDVSNIDHQFPLLVNINENRRIARDEVREYIQSYVSEAYPTDPNIELRVEELIEQHAVGKVDEYYDSTMHAVKVTGSKNLLLSFESMKNKDDVTKLINMFNQKIKDNLIK</sequence>
<keyword id="KW-0285">Flavoprotein</keyword>
<keyword id="KW-0288">FMN</keyword>
<keyword id="KW-0455">Luminescence</keyword>
<keyword id="KW-0503">Monooxygenase</keyword>
<keyword id="KW-0560">Oxidoreductase</keyword>
<keyword id="KW-0599">Photoprotein</keyword>
<organism>
    <name type="scientific">Photobacterium leiognathi</name>
    <dbReference type="NCBI Taxonomy" id="553611"/>
    <lineage>
        <taxon>Bacteria</taxon>
        <taxon>Pseudomonadati</taxon>
        <taxon>Pseudomonadota</taxon>
        <taxon>Gammaproteobacteria</taxon>
        <taxon>Vibrionales</taxon>
        <taxon>Vibrionaceae</taxon>
        <taxon>Photobacterium</taxon>
    </lineage>
</organism>
<dbReference type="EC" id="1.14.14.3" evidence="2"/>
<dbReference type="EMBL" id="M63594">
    <property type="protein sequence ID" value="AAA25619.1"/>
    <property type="molecule type" value="Genomic_DNA"/>
</dbReference>
<dbReference type="PIR" id="S17954">
    <property type="entry name" value="S17954"/>
</dbReference>
<dbReference type="RefSeq" id="WP_023934906.1">
    <property type="nucleotide sequence ID" value="NZ_PYOJ01000031.1"/>
</dbReference>
<dbReference type="SMR" id="P29239"/>
<dbReference type="OrthoDB" id="7903015at2"/>
<dbReference type="GO" id="GO:0005829">
    <property type="term" value="C:cytosol"/>
    <property type="evidence" value="ECO:0007669"/>
    <property type="project" value="TreeGrafter"/>
</dbReference>
<dbReference type="GO" id="GO:0047646">
    <property type="term" value="F:alkanal monooxygenase (FMN-linked) activity"/>
    <property type="evidence" value="ECO:0007669"/>
    <property type="project" value="UniProtKB-EC"/>
</dbReference>
<dbReference type="GO" id="GO:0008218">
    <property type="term" value="P:bioluminescence"/>
    <property type="evidence" value="ECO:0007669"/>
    <property type="project" value="UniProtKB-KW"/>
</dbReference>
<dbReference type="CDD" id="cd01096">
    <property type="entry name" value="Alkanal_monooxygenase"/>
    <property type="match status" value="1"/>
</dbReference>
<dbReference type="Gene3D" id="3.20.20.30">
    <property type="entry name" value="Luciferase-like domain"/>
    <property type="match status" value="2"/>
</dbReference>
<dbReference type="InterPro" id="IPR033924">
    <property type="entry name" value="Alkanal_monooxygenase"/>
</dbReference>
<dbReference type="InterPro" id="IPR050766">
    <property type="entry name" value="Bact_Lucif_Oxidored"/>
</dbReference>
<dbReference type="InterPro" id="IPR018235">
    <property type="entry name" value="Bacterial_luciferase_CS"/>
</dbReference>
<dbReference type="InterPro" id="IPR011251">
    <property type="entry name" value="Luciferase-like_dom"/>
</dbReference>
<dbReference type="InterPro" id="IPR036661">
    <property type="entry name" value="Luciferase-like_sf"/>
</dbReference>
<dbReference type="InterPro" id="IPR002103">
    <property type="entry name" value="Luciferase_bac/NFP"/>
</dbReference>
<dbReference type="PANTHER" id="PTHR30137:SF8">
    <property type="entry name" value="BLR5498 PROTEIN"/>
    <property type="match status" value="1"/>
</dbReference>
<dbReference type="PANTHER" id="PTHR30137">
    <property type="entry name" value="LUCIFERASE-LIKE MONOOXYGENASE"/>
    <property type="match status" value="1"/>
</dbReference>
<dbReference type="Pfam" id="PF00296">
    <property type="entry name" value="Bac_luciferase"/>
    <property type="match status" value="1"/>
</dbReference>
<dbReference type="PRINTS" id="PR00089">
    <property type="entry name" value="LUCIFERASE"/>
</dbReference>
<dbReference type="SUPFAM" id="SSF51679">
    <property type="entry name" value="Bacterial luciferase-like"/>
    <property type="match status" value="1"/>
</dbReference>
<dbReference type="PROSITE" id="PS00494">
    <property type="entry name" value="BACTERIAL_LUCIFERASE"/>
    <property type="match status" value="1"/>
</dbReference>
<feature type="chain" id="PRO_0000220175" description="Alkanal monooxygenase beta chain">
    <location>
        <begin position="1"/>
        <end position="326"/>
    </location>
</feature>
<gene>
    <name type="primary">luxB</name>
</gene>
<reference key="1">
    <citation type="journal article" date="1991" name="Eur. J. Biochem.">
        <title>The lux genes of the luminous bacterial symbiont, Photobacterium leiognathi, of the ponyfish. Nucleotide sequence, difference in gene organization, and high expression in mutant Escherichia coli.</title>
        <authorList>
            <person name="Lee C.Y."/>
            <person name="Szittner R.B."/>
            <person name="Meighen E.A."/>
        </authorList>
    </citation>
    <scope>NUCLEOTIDE SEQUENCE [GENOMIC DNA]</scope>
    <scope>FUNCTION</scope>
    <scope>CATALYTIC ACTIVITY</scope>
    <source>
        <strain>ATCC 25521 / DSM 21260 / CCUG 16229 / CIP 66.5 / NCIMB 2193 / L1</strain>
    </source>
</reference>
<proteinExistence type="evidence at protein level"/>
<name>LUXB2_PHOLE</name>
<comment type="function">
    <text evidence="2">Light-emitting reaction in luminous bacteria. The specific role of the beta subunit is unknown, but it is absolutely required for bioluminescence activity.</text>
</comment>
<comment type="catalytic activity">
    <reaction evidence="2">
        <text>a long-chain fatty aldehyde + FMNH2 + O2 = a long-chain fatty acid + hnu + FMN + H2O + 2 H(+)</text>
        <dbReference type="Rhea" id="RHEA:17181"/>
        <dbReference type="ChEBI" id="CHEBI:15377"/>
        <dbReference type="ChEBI" id="CHEBI:15378"/>
        <dbReference type="ChEBI" id="CHEBI:15379"/>
        <dbReference type="ChEBI" id="CHEBI:17176"/>
        <dbReference type="ChEBI" id="CHEBI:30212"/>
        <dbReference type="ChEBI" id="CHEBI:57560"/>
        <dbReference type="ChEBI" id="CHEBI:57618"/>
        <dbReference type="ChEBI" id="CHEBI:58210"/>
        <dbReference type="EC" id="1.14.14.3"/>
    </reaction>
</comment>
<comment type="subunit">
    <text evidence="1">Heterodimer of an alpha and a beta chain.</text>
</comment>
<comment type="similarity">
    <text evidence="3">Belongs to the bacterial luciferase oxidoreductase family.</text>
</comment>
<accession>P29239</accession>
<evidence type="ECO:0000250" key="1">
    <source>
        <dbReference type="UniProtKB" id="P07740"/>
    </source>
</evidence>
<evidence type="ECO:0000269" key="2">
    <source>
    </source>
</evidence>
<evidence type="ECO:0000305" key="3"/>
<protein>
    <recommendedName>
        <fullName>Alkanal monooxygenase beta chain</fullName>
        <ecNumber evidence="2">1.14.14.3</ecNumber>
    </recommendedName>
    <alternativeName>
        <fullName>Bacterial luciferase beta chain</fullName>
    </alternativeName>
</protein>